<sequence>MVTLTGHSLTVEEMKRLLFEREGVTACPDSMQKVAECREAVEKIVEDGKVVYGITTGFGKFSDVLIQKEDVKELQHNLIQSHACGVGDPFPEEVSRGMLILRANTMLKGVSGVRPLVVNMLLELVNRNIHPVIPQQGSLGASGDLAPLSHLALVLLGEGEVFYKGKRVHAMIALTEEGLEPIELEAKEGLALINGTQAMTAQGILSYIEAETLAYQSELIASMTLEGLRGIIDAFDENVHKARGYKEQIEVAQRIRNILQDSKLVTKQGELRVQDAYSLRCIPQVHGASWQVLHYVKEKLEIEMNAATDNPLIFDGGEKVISGGNFHGQPIAFAMDFLKVGMAEIANISERRIERLVNPQLNDLPPFLSPKPGLQSGAMIMQYAAASLVSENKTLAHPASVDSIPSSANQEDHVSMGTIASRHAHQIIQNVRRVLAIEMICAMQAAEYRGIEEMSSATKIFYHQGRQQVPSITNDRIFSTDIENIAHWLKTSPFTLERLNVNATL</sequence>
<evidence type="ECO:0000255" key="1">
    <source>
        <dbReference type="HAMAP-Rule" id="MF_00229"/>
    </source>
</evidence>
<reference key="1">
    <citation type="journal article" date="2008" name="Chem. Biol. Interact.">
        <title>Extending the Bacillus cereus group genomics to putative food-borne pathogens of different toxicity.</title>
        <authorList>
            <person name="Lapidus A."/>
            <person name="Goltsman E."/>
            <person name="Auger S."/>
            <person name="Galleron N."/>
            <person name="Segurens B."/>
            <person name="Dossat C."/>
            <person name="Land M.L."/>
            <person name="Broussolle V."/>
            <person name="Brillard J."/>
            <person name="Guinebretiere M.-H."/>
            <person name="Sanchis V."/>
            <person name="Nguen-the C."/>
            <person name="Lereclus D."/>
            <person name="Richardson P."/>
            <person name="Wincker P."/>
            <person name="Weissenbach J."/>
            <person name="Ehrlich S.D."/>
            <person name="Sorokin A."/>
        </authorList>
    </citation>
    <scope>NUCLEOTIDE SEQUENCE [LARGE SCALE GENOMIC DNA]</scope>
    <source>
        <strain>DSM 22905 / CIP 110041 / 391-98 / NVH 391-98</strain>
    </source>
</reference>
<accession>A7GR00</accession>
<protein>
    <recommendedName>
        <fullName evidence="1">Histidine ammonia-lyase</fullName>
        <shortName evidence="1">Histidase</shortName>
        <ecNumber evidence="1">4.3.1.3</ecNumber>
    </recommendedName>
</protein>
<name>HUTH_BACCN</name>
<comment type="catalytic activity">
    <reaction evidence="1">
        <text>L-histidine = trans-urocanate + NH4(+)</text>
        <dbReference type="Rhea" id="RHEA:21232"/>
        <dbReference type="ChEBI" id="CHEBI:17771"/>
        <dbReference type="ChEBI" id="CHEBI:28938"/>
        <dbReference type="ChEBI" id="CHEBI:57595"/>
        <dbReference type="EC" id="4.3.1.3"/>
    </reaction>
</comment>
<comment type="pathway">
    <text evidence="1">Amino-acid degradation; L-histidine degradation into L-glutamate; N-formimidoyl-L-glutamate from L-histidine: step 1/3.</text>
</comment>
<comment type="subcellular location">
    <subcellularLocation>
        <location evidence="1">Cytoplasm</location>
    </subcellularLocation>
</comment>
<comment type="PTM">
    <text evidence="1">Contains an active site 4-methylidene-imidazol-5-one (MIO), which is formed autocatalytically by cyclization and dehydration of residues Ala-Ser-Gly.</text>
</comment>
<comment type="similarity">
    <text evidence="1">Belongs to the PAL/histidase family.</text>
</comment>
<proteinExistence type="inferred from homology"/>
<dbReference type="EC" id="4.3.1.3" evidence="1"/>
<dbReference type="EMBL" id="CP000764">
    <property type="protein sequence ID" value="ABS22558.1"/>
    <property type="molecule type" value="Genomic_DNA"/>
</dbReference>
<dbReference type="RefSeq" id="WP_012094754.1">
    <property type="nucleotide sequence ID" value="NC_009674.1"/>
</dbReference>
<dbReference type="SMR" id="A7GR00"/>
<dbReference type="STRING" id="315749.Bcer98_2312"/>
<dbReference type="GeneID" id="33897583"/>
<dbReference type="KEGG" id="bcy:Bcer98_2312"/>
<dbReference type="eggNOG" id="COG2986">
    <property type="taxonomic scope" value="Bacteria"/>
</dbReference>
<dbReference type="HOGENOM" id="CLU_014801_4_0_9"/>
<dbReference type="OrthoDB" id="9806955at2"/>
<dbReference type="UniPathway" id="UPA00379">
    <property type="reaction ID" value="UER00549"/>
</dbReference>
<dbReference type="Proteomes" id="UP000002300">
    <property type="component" value="Chromosome"/>
</dbReference>
<dbReference type="GO" id="GO:0005737">
    <property type="term" value="C:cytoplasm"/>
    <property type="evidence" value="ECO:0007669"/>
    <property type="project" value="UniProtKB-SubCell"/>
</dbReference>
<dbReference type="GO" id="GO:0004397">
    <property type="term" value="F:histidine ammonia-lyase activity"/>
    <property type="evidence" value="ECO:0007669"/>
    <property type="project" value="UniProtKB-UniRule"/>
</dbReference>
<dbReference type="GO" id="GO:0019556">
    <property type="term" value="P:L-histidine catabolic process to glutamate and formamide"/>
    <property type="evidence" value="ECO:0007669"/>
    <property type="project" value="UniProtKB-UniPathway"/>
</dbReference>
<dbReference type="GO" id="GO:0019557">
    <property type="term" value="P:L-histidine catabolic process to glutamate and formate"/>
    <property type="evidence" value="ECO:0007669"/>
    <property type="project" value="UniProtKB-UniPathway"/>
</dbReference>
<dbReference type="CDD" id="cd00332">
    <property type="entry name" value="PAL-HAL"/>
    <property type="match status" value="1"/>
</dbReference>
<dbReference type="FunFam" id="1.10.275.10:FF:000008">
    <property type="entry name" value="Histidine ammonia-lyase"/>
    <property type="match status" value="1"/>
</dbReference>
<dbReference type="FunFam" id="1.20.200.10:FF:000003">
    <property type="entry name" value="Histidine ammonia-lyase"/>
    <property type="match status" value="1"/>
</dbReference>
<dbReference type="Gene3D" id="1.20.200.10">
    <property type="entry name" value="Fumarase/aspartase (Central domain)"/>
    <property type="match status" value="1"/>
</dbReference>
<dbReference type="Gene3D" id="1.10.275.10">
    <property type="entry name" value="Fumarase/aspartase (N-terminal domain)"/>
    <property type="match status" value="1"/>
</dbReference>
<dbReference type="HAMAP" id="MF_00229">
    <property type="entry name" value="His_ammonia_lyase"/>
    <property type="match status" value="1"/>
</dbReference>
<dbReference type="InterPro" id="IPR001106">
    <property type="entry name" value="Aromatic_Lyase"/>
</dbReference>
<dbReference type="InterPro" id="IPR024083">
    <property type="entry name" value="Fumarase/histidase_N"/>
</dbReference>
<dbReference type="InterPro" id="IPR005921">
    <property type="entry name" value="HutH"/>
</dbReference>
<dbReference type="InterPro" id="IPR008948">
    <property type="entry name" value="L-Aspartase-like"/>
</dbReference>
<dbReference type="InterPro" id="IPR022313">
    <property type="entry name" value="Phe/His_NH3-lyase_AS"/>
</dbReference>
<dbReference type="NCBIfam" id="TIGR01225">
    <property type="entry name" value="hutH"/>
    <property type="match status" value="1"/>
</dbReference>
<dbReference type="NCBIfam" id="NF006871">
    <property type="entry name" value="PRK09367.1"/>
    <property type="match status" value="1"/>
</dbReference>
<dbReference type="PANTHER" id="PTHR10362">
    <property type="entry name" value="HISTIDINE AMMONIA-LYASE"/>
    <property type="match status" value="1"/>
</dbReference>
<dbReference type="Pfam" id="PF00221">
    <property type="entry name" value="Lyase_aromatic"/>
    <property type="match status" value="1"/>
</dbReference>
<dbReference type="SUPFAM" id="SSF48557">
    <property type="entry name" value="L-aspartase-like"/>
    <property type="match status" value="1"/>
</dbReference>
<dbReference type="PROSITE" id="PS00488">
    <property type="entry name" value="PAL_HISTIDASE"/>
    <property type="match status" value="1"/>
</dbReference>
<keyword id="KW-0963">Cytoplasm</keyword>
<keyword id="KW-0369">Histidine metabolism</keyword>
<keyword id="KW-0456">Lyase</keyword>
<feature type="chain" id="PRO_1000078220" description="Histidine ammonia-lyase">
    <location>
        <begin position="1"/>
        <end position="505"/>
    </location>
</feature>
<feature type="modified residue" description="2,3-didehydroalanine (Ser)" evidence="1">
    <location>
        <position position="142"/>
    </location>
</feature>
<feature type="cross-link" description="5-imidazolinone (Ala-Gly)" evidence="1">
    <location>
        <begin position="141"/>
        <end position="143"/>
    </location>
</feature>
<gene>
    <name evidence="1" type="primary">hutH</name>
    <name type="ordered locus">Bcer98_2312</name>
</gene>
<organism>
    <name type="scientific">Bacillus cytotoxicus (strain DSM 22905 / CIP 110041 / 391-98 / NVH 391-98)</name>
    <dbReference type="NCBI Taxonomy" id="315749"/>
    <lineage>
        <taxon>Bacteria</taxon>
        <taxon>Bacillati</taxon>
        <taxon>Bacillota</taxon>
        <taxon>Bacilli</taxon>
        <taxon>Bacillales</taxon>
        <taxon>Bacillaceae</taxon>
        <taxon>Bacillus</taxon>
        <taxon>Bacillus cereus group</taxon>
    </lineage>
</organism>